<organism>
    <name type="scientific">Chlamydia trachomatis serovar D (strain ATCC VR-885 / DSM 19411 / UW-3/Cx)</name>
    <dbReference type="NCBI Taxonomy" id="272561"/>
    <lineage>
        <taxon>Bacteria</taxon>
        <taxon>Pseudomonadati</taxon>
        <taxon>Chlamydiota</taxon>
        <taxon>Chlamydiia</taxon>
        <taxon>Chlamydiales</taxon>
        <taxon>Chlamydiaceae</taxon>
        <taxon>Chlamydia/Chlamydophila group</taxon>
        <taxon>Chlamydia</taxon>
    </lineage>
</organism>
<sequence length="365" mass="41246">MRVLSLFLKDFRNYTDLRLELGPEMNSIFGLNAQGKTNLLEALYILSLGRSFRTSRLTDAIRFGASHFFIEAVFSHKEVFHTLSIQVDKKGKKILFDGAPITKLSELVGLFPVILFSIKDIAIIEGSPSERRRFLDLLLAQASDKYTEHISLYHKALDQRNASIKAQNQKAISAWNSPLIAYGSLVAFLRNECTKKLNTIFQTLWDNTLKETLSLRYESSLITEESPTLNDIASNYYEQLRIANTKDLDLGYTMVGPHRDELLLTINDLPVAKFSSEGQKHSLLAVLRFAECVYLQEEFCIHPLLCMDDIHACLDQQRLDQLLQLSNSLGQVVTTSTICPDHRSTTSCIFHVTQAQVSLVAPQSL</sequence>
<keyword id="KW-0067">ATP-binding</keyword>
<keyword id="KW-0963">Cytoplasm</keyword>
<keyword id="KW-0227">DNA damage</keyword>
<keyword id="KW-0234">DNA repair</keyword>
<keyword id="KW-0235">DNA replication</keyword>
<keyword id="KW-0238">DNA-binding</keyword>
<keyword id="KW-0547">Nucleotide-binding</keyword>
<keyword id="KW-1185">Reference proteome</keyword>
<keyword id="KW-0742">SOS response</keyword>
<reference key="1">
    <citation type="journal article" date="1998" name="Science">
        <title>Genome sequence of an obligate intracellular pathogen of humans: Chlamydia trachomatis.</title>
        <authorList>
            <person name="Stephens R.S."/>
            <person name="Kalman S."/>
            <person name="Lammel C.J."/>
            <person name="Fan J."/>
            <person name="Marathe R."/>
            <person name="Aravind L."/>
            <person name="Mitchell W.P."/>
            <person name="Olinger L."/>
            <person name="Tatusov R.L."/>
            <person name="Zhao Q."/>
            <person name="Koonin E.V."/>
            <person name="Davis R.W."/>
        </authorList>
    </citation>
    <scope>NUCLEOTIDE SEQUENCE [LARGE SCALE GENOMIC DNA]</scope>
    <source>
        <strain>ATCC VR-885 / DSM 19411 / UW-3/Cx</strain>
    </source>
</reference>
<comment type="function">
    <text evidence="1">The RecF protein is involved in DNA metabolism; it is required for DNA replication and normal SOS inducibility. RecF binds preferentially to single-stranded, linear DNA. It also seems to bind ATP (By similarity).</text>
</comment>
<comment type="subcellular location">
    <subcellularLocation>
        <location evidence="1">Cytoplasm</location>
    </subcellularLocation>
</comment>
<comment type="similarity">
    <text evidence="3">Belongs to the RecF family.</text>
</comment>
<feature type="chain" id="PRO_0000196405" description="DNA replication and repair protein RecF">
    <location>
        <begin position="1"/>
        <end position="365"/>
    </location>
</feature>
<feature type="binding site" evidence="2">
    <location>
        <begin position="30"/>
        <end position="37"/>
    </location>
    <ligand>
        <name>ATP</name>
        <dbReference type="ChEBI" id="CHEBI:30616"/>
    </ligand>
</feature>
<protein>
    <recommendedName>
        <fullName>DNA replication and repair protein RecF</fullName>
    </recommendedName>
</protein>
<evidence type="ECO:0000250" key="1"/>
<evidence type="ECO:0000255" key="2"/>
<evidence type="ECO:0000305" key="3"/>
<dbReference type="EMBL" id="AE001273">
    <property type="protein sequence ID" value="AAC67665.1"/>
    <property type="molecule type" value="Genomic_DNA"/>
</dbReference>
<dbReference type="PIR" id="D71559">
    <property type="entry name" value="D71559"/>
</dbReference>
<dbReference type="RefSeq" id="NP_219577.1">
    <property type="nucleotide sequence ID" value="NC_000117.1"/>
</dbReference>
<dbReference type="RefSeq" id="WP_009871423.1">
    <property type="nucleotide sequence ID" value="NC_000117.1"/>
</dbReference>
<dbReference type="SMR" id="O84077"/>
<dbReference type="FunCoup" id="O84077">
    <property type="interactions" value="113"/>
</dbReference>
<dbReference type="STRING" id="272561.CT_074"/>
<dbReference type="EnsemblBacteria" id="AAC67665">
    <property type="protein sequence ID" value="AAC67665"/>
    <property type="gene ID" value="CT_074"/>
</dbReference>
<dbReference type="GeneID" id="884122"/>
<dbReference type="KEGG" id="ctr:CT_074"/>
<dbReference type="PATRIC" id="fig|272561.5.peg.83"/>
<dbReference type="HOGENOM" id="CLU_040267_0_1_0"/>
<dbReference type="InParanoid" id="O84077"/>
<dbReference type="OrthoDB" id="9803889at2"/>
<dbReference type="Proteomes" id="UP000000431">
    <property type="component" value="Chromosome"/>
</dbReference>
<dbReference type="GO" id="GO:0005737">
    <property type="term" value="C:cytoplasm"/>
    <property type="evidence" value="ECO:0007669"/>
    <property type="project" value="UniProtKB-SubCell"/>
</dbReference>
<dbReference type="GO" id="GO:0005524">
    <property type="term" value="F:ATP binding"/>
    <property type="evidence" value="ECO:0007669"/>
    <property type="project" value="UniProtKB-UniRule"/>
</dbReference>
<dbReference type="GO" id="GO:0003697">
    <property type="term" value="F:single-stranded DNA binding"/>
    <property type="evidence" value="ECO:0007669"/>
    <property type="project" value="UniProtKB-UniRule"/>
</dbReference>
<dbReference type="GO" id="GO:0006260">
    <property type="term" value="P:DNA replication"/>
    <property type="evidence" value="ECO:0007669"/>
    <property type="project" value="UniProtKB-UniRule"/>
</dbReference>
<dbReference type="GO" id="GO:0000731">
    <property type="term" value="P:DNA synthesis involved in DNA repair"/>
    <property type="evidence" value="ECO:0000318"/>
    <property type="project" value="GO_Central"/>
</dbReference>
<dbReference type="GO" id="GO:0006302">
    <property type="term" value="P:double-strand break repair"/>
    <property type="evidence" value="ECO:0000318"/>
    <property type="project" value="GO_Central"/>
</dbReference>
<dbReference type="GO" id="GO:0009432">
    <property type="term" value="P:SOS response"/>
    <property type="evidence" value="ECO:0007669"/>
    <property type="project" value="UniProtKB-UniRule"/>
</dbReference>
<dbReference type="Gene3D" id="3.40.50.300">
    <property type="entry name" value="P-loop containing nucleotide triphosphate hydrolases"/>
    <property type="match status" value="1"/>
</dbReference>
<dbReference type="Gene3D" id="1.20.1050.90">
    <property type="entry name" value="RecF/RecN/SMC, N-terminal domain"/>
    <property type="match status" value="1"/>
</dbReference>
<dbReference type="HAMAP" id="MF_00365">
    <property type="entry name" value="RecF"/>
    <property type="match status" value="1"/>
</dbReference>
<dbReference type="InterPro" id="IPR001238">
    <property type="entry name" value="DNA-binding_RecF"/>
</dbReference>
<dbReference type="InterPro" id="IPR018078">
    <property type="entry name" value="DNA-binding_RecF_CS"/>
</dbReference>
<dbReference type="InterPro" id="IPR027417">
    <property type="entry name" value="P-loop_NTPase"/>
</dbReference>
<dbReference type="InterPro" id="IPR003395">
    <property type="entry name" value="RecF/RecN/SMC_N"/>
</dbReference>
<dbReference type="InterPro" id="IPR042174">
    <property type="entry name" value="RecF_2"/>
</dbReference>
<dbReference type="NCBIfam" id="TIGR00611">
    <property type="entry name" value="recf"/>
    <property type="match status" value="1"/>
</dbReference>
<dbReference type="PANTHER" id="PTHR32182">
    <property type="entry name" value="DNA REPLICATION AND REPAIR PROTEIN RECF"/>
    <property type="match status" value="1"/>
</dbReference>
<dbReference type="PANTHER" id="PTHR32182:SF0">
    <property type="entry name" value="DNA REPLICATION AND REPAIR PROTEIN RECF"/>
    <property type="match status" value="1"/>
</dbReference>
<dbReference type="Pfam" id="PF02463">
    <property type="entry name" value="SMC_N"/>
    <property type="match status" value="1"/>
</dbReference>
<dbReference type="SUPFAM" id="SSF52540">
    <property type="entry name" value="P-loop containing nucleoside triphosphate hydrolases"/>
    <property type="match status" value="1"/>
</dbReference>
<dbReference type="PROSITE" id="PS00617">
    <property type="entry name" value="RECF_1"/>
    <property type="match status" value="1"/>
</dbReference>
<dbReference type="PROSITE" id="PS00618">
    <property type="entry name" value="RECF_2"/>
    <property type="match status" value="1"/>
</dbReference>
<proteinExistence type="inferred from homology"/>
<accession>O84077</accession>
<name>RECF_CHLTR</name>
<gene>
    <name type="primary">recF</name>
    <name type="ordered locus">CT_074</name>
</gene>